<protein>
    <recommendedName>
        <fullName>Zinc finger transcription factor ace1</fullName>
    </recommendedName>
    <alternativeName>
        <fullName>ACEI</fullName>
    </alternativeName>
</protein>
<proteinExistence type="predicted"/>
<feature type="chain" id="PRO_0000046798" description="Zinc finger transcription factor ace1">
    <location>
        <begin position="1"/>
        <end position="733"/>
    </location>
</feature>
<feature type="zinc finger region" description="C2H2-type 1" evidence="1">
    <location>
        <begin position="400"/>
        <end position="424"/>
    </location>
</feature>
<feature type="zinc finger region" description="C2H2-type 2" evidence="1">
    <location>
        <begin position="428"/>
        <end position="456"/>
    </location>
</feature>
<feature type="zinc finger region" description="C2H2-type 3" evidence="1">
    <location>
        <begin position="463"/>
        <end position="488"/>
    </location>
</feature>
<feature type="region of interest" description="Disordered" evidence="2">
    <location>
        <begin position="1"/>
        <end position="22"/>
    </location>
</feature>
<feature type="region of interest" description="Disordered" evidence="2">
    <location>
        <begin position="34"/>
        <end position="63"/>
    </location>
</feature>
<feature type="region of interest" description="Disordered" evidence="2">
    <location>
        <begin position="89"/>
        <end position="183"/>
    </location>
</feature>
<feature type="region of interest" description="Disordered" evidence="2">
    <location>
        <begin position="497"/>
        <end position="533"/>
    </location>
</feature>
<feature type="compositionally biased region" description="Basic residues" evidence="2">
    <location>
        <begin position="1"/>
        <end position="11"/>
    </location>
</feature>
<feature type="compositionally biased region" description="Low complexity" evidence="2">
    <location>
        <begin position="39"/>
        <end position="49"/>
    </location>
</feature>
<feature type="compositionally biased region" description="Basic residues" evidence="2">
    <location>
        <begin position="132"/>
        <end position="142"/>
    </location>
</feature>
<feature type="compositionally biased region" description="Polar residues" evidence="2">
    <location>
        <begin position="148"/>
        <end position="158"/>
    </location>
</feature>
<feature type="compositionally biased region" description="Low complexity" evidence="2">
    <location>
        <begin position="171"/>
        <end position="183"/>
    </location>
</feature>
<feature type="compositionally biased region" description="Polar residues" evidence="2">
    <location>
        <begin position="503"/>
        <end position="515"/>
    </location>
</feature>
<feature type="compositionally biased region" description="Low complexity" evidence="2">
    <location>
        <begin position="519"/>
        <end position="530"/>
    </location>
</feature>
<reference evidence="4" key="1">
    <citation type="journal article" date="2000" name="J. Biol. Chem.">
        <title>Isolation of the ace1 gene encoding a Cys2-His2 transcription factor involved in regulation of activity of the cellulase promoter cbh1 of Trichoderma reesei.</title>
        <authorList>
            <person name="Saloheimo A."/>
            <person name="Aro N."/>
            <person name="Ilmen M."/>
            <person name="Penttilae M."/>
        </authorList>
    </citation>
    <scope>NUCLEOTIDE SEQUENCE [GENOMIC DNA]</scope>
    <source>
        <strain>VTT-D-80133</strain>
    </source>
</reference>
<organism evidence="5">
    <name type="scientific">Hypocrea jecorina</name>
    <name type="common">Trichoderma reesei</name>
    <dbReference type="NCBI Taxonomy" id="51453"/>
    <lineage>
        <taxon>Eukaryota</taxon>
        <taxon>Fungi</taxon>
        <taxon>Dikarya</taxon>
        <taxon>Ascomycota</taxon>
        <taxon>Pezizomycotina</taxon>
        <taxon>Sordariomycetes</taxon>
        <taxon>Hypocreomycetidae</taxon>
        <taxon>Hypocreales</taxon>
        <taxon>Hypocreaceae</taxon>
        <taxon>Trichoderma</taxon>
    </lineage>
</organism>
<sequence length="733" mass="81924">MSFSNPRRRTPVTRPGTDCEHGLSLKTTMTLRKGATFHSPTSPSASSAAGDFVPPTLTRSQSAFDDVVDASRRRIAMTLNDIDEALSKASLSDKSPRPKPLRDTSLPVPRGFLEPPVVDPAMNKQEPERRVLRPRSVRRTRNHASDSGIGSSVVSTNDKAGAADSTKKPQASALTRSAASSTTAMLPSLSHRAVNRIREHTLRPLLEKPTLKEFEPIVLDVPRRIRSKEIICLRDLEKTLIFMAPEKAKSAALYLDFCLTSVRCIQATVEYLTDREQVRPGDRPYTNGYFIDLKEQIYQYGKQLAAIKEKGSLADDMDIDPSDEVRLYGGVAENGRPAELIRVKKDGTAYSMATGKIVDMTESPTPLKRSLSEQREDEEEIMRSMARRKKNATPEDVAPKKCREPGCTKEFKRPCDLTKHEKTHSRPWKCPIPTCKYHEYGWPTEKEMDRHINDKHSDAPAMYECLFKPCPYKSKRESNCKQHMEKAHGWTYVRTKTNGKKAPSQNGSTAQQTPPLANVSTPSSTPSYSVPTPPQDQVMSTDFPMYPADDDWLATYGAQPNTIDAMDLGLENLSPASAASSYEQYPPYQNGSTFIINDEDIYAAHVQIPAQLPTPEQVYTKMMPQQMPVYHVQQEPCTTVPILGEPQFSPNAQQNAVLYTPTSLREVDEGFDESYAADGADFQLFPATVDKTDVFQSLFTDMPSANLGFSQTTQPDIFNQIDWSNLDYQGFQE</sequence>
<name>ACE1_HYPJE</name>
<evidence type="ECO:0000255" key="1">
    <source>
        <dbReference type="PROSITE-ProRule" id="PRU00042"/>
    </source>
</evidence>
<evidence type="ECO:0000256" key="2">
    <source>
        <dbReference type="SAM" id="MobiDB-lite"/>
    </source>
</evidence>
<evidence type="ECO:0000269" key="3">
    <source>
    </source>
</evidence>
<evidence type="ECO:0000305" key="4"/>
<evidence type="ECO:0000312" key="5">
    <source>
        <dbReference type="EMBL" id="AAF35286.1"/>
    </source>
</evidence>
<dbReference type="EMBL" id="AF190793">
    <property type="protein sequence ID" value="AAF35286.1"/>
    <property type="molecule type" value="Genomic_DNA"/>
</dbReference>
<dbReference type="SMR" id="Q9P8W3"/>
<dbReference type="GO" id="GO:0005634">
    <property type="term" value="C:nucleus"/>
    <property type="evidence" value="ECO:0007669"/>
    <property type="project" value="UniProtKB-SubCell"/>
</dbReference>
<dbReference type="GO" id="GO:0003677">
    <property type="term" value="F:DNA binding"/>
    <property type="evidence" value="ECO:0007669"/>
    <property type="project" value="UniProtKB-KW"/>
</dbReference>
<dbReference type="GO" id="GO:0008270">
    <property type="term" value="F:zinc ion binding"/>
    <property type="evidence" value="ECO:0007669"/>
    <property type="project" value="UniProtKB-KW"/>
</dbReference>
<dbReference type="GO" id="GO:0006357">
    <property type="term" value="P:regulation of transcription by RNA polymerase II"/>
    <property type="evidence" value="ECO:0007669"/>
    <property type="project" value="TreeGrafter"/>
</dbReference>
<dbReference type="Gene3D" id="3.30.160.60">
    <property type="entry name" value="Classic Zinc Finger"/>
    <property type="match status" value="1"/>
</dbReference>
<dbReference type="InterPro" id="IPR051061">
    <property type="entry name" value="Zinc_finger_trans_reg"/>
</dbReference>
<dbReference type="InterPro" id="IPR013087">
    <property type="entry name" value="Znf_C2H2_type"/>
</dbReference>
<dbReference type="PANTHER" id="PTHR46179:SF13">
    <property type="entry name" value="C2H2-TYPE DOMAIN-CONTAINING PROTEIN"/>
    <property type="match status" value="1"/>
</dbReference>
<dbReference type="PANTHER" id="PTHR46179">
    <property type="entry name" value="ZINC FINGER PROTEIN"/>
    <property type="match status" value="1"/>
</dbReference>
<dbReference type="SMART" id="SM00355">
    <property type="entry name" value="ZnF_C2H2"/>
    <property type="match status" value="3"/>
</dbReference>
<dbReference type="PROSITE" id="PS00028">
    <property type="entry name" value="ZINC_FINGER_C2H2_1"/>
    <property type="match status" value="1"/>
</dbReference>
<dbReference type="PROSITE" id="PS50157">
    <property type="entry name" value="ZINC_FINGER_C2H2_2"/>
    <property type="match status" value="1"/>
</dbReference>
<keyword id="KW-0010">Activator</keyword>
<keyword id="KW-0238">DNA-binding</keyword>
<keyword id="KW-0479">Metal-binding</keyword>
<keyword id="KW-0539">Nucleus</keyword>
<keyword id="KW-0677">Repeat</keyword>
<keyword id="KW-0804">Transcription</keyword>
<keyword id="KW-0805">Transcription regulation</keyword>
<keyword id="KW-0862">Zinc</keyword>
<keyword id="KW-0863">Zinc-finger</keyword>
<accession>Q9P8W3</accession>
<comment type="function">
    <text evidence="3">Binds to the promoter of the cbh1 gene and activates transcription.</text>
</comment>
<comment type="subcellular location">
    <subcellularLocation>
        <location evidence="4">Nucleus</location>
    </subcellularLocation>
</comment>
<gene>
    <name type="primary">ace1</name>
</gene>